<keyword id="KW-0067">ATP-binding</keyword>
<keyword id="KW-0436">Ligase</keyword>
<keyword id="KW-0547">Nucleotide-binding</keyword>
<keyword id="KW-0648">Protein biosynthesis</keyword>
<protein>
    <recommendedName>
        <fullName evidence="1">Glutamyl-tRNA(Gln) amidotransferase subunit A</fullName>
        <shortName evidence="1">Glu-ADT subunit A</shortName>
        <ecNumber evidence="1">6.3.5.7</ecNumber>
    </recommendedName>
</protein>
<reference key="1">
    <citation type="journal article" date="2002" name="Mol. Microbiol.">
        <title>Genome sequence of Streptococcus agalactiae, a pathogen causing invasive neonatal disease.</title>
        <authorList>
            <person name="Glaser P."/>
            <person name="Rusniok C."/>
            <person name="Buchrieser C."/>
            <person name="Chevalier F."/>
            <person name="Frangeul L."/>
            <person name="Msadek T."/>
            <person name="Zouine M."/>
            <person name="Couve E."/>
            <person name="Lalioui L."/>
            <person name="Poyart C."/>
            <person name="Trieu-Cuot P."/>
            <person name="Kunst F."/>
        </authorList>
    </citation>
    <scope>NUCLEOTIDE SEQUENCE [LARGE SCALE GENOMIC DNA]</scope>
    <source>
        <strain>NEM316</strain>
    </source>
</reference>
<comment type="function">
    <text evidence="1">Allows the formation of correctly charged Gln-tRNA(Gln) through the transamidation of misacylated Glu-tRNA(Gln) in organisms which lack glutaminyl-tRNA synthetase. The reaction takes place in the presence of glutamine and ATP through an activated gamma-phospho-Glu-tRNA(Gln).</text>
</comment>
<comment type="catalytic activity">
    <reaction evidence="1">
        <text>L-glutamyl-tRNA(Gln) + L-glutamine + ATP + H2O = L-glutaminyl-tRNA(Gln) + L-glutamate + ADP + phosphate + H(+)</text>
        <dbReference type="Rhea" id="RHEA:17521"/>
        <dbReference type="Rhea" id="RHEA-COMP:9681"/>
        <dbReference type="Rhea" id="RHEA-COMP:9684"/>
        <dbReference type="ChEBI" id="CHEBI:15377"/>
        <dbReference type="ChEBI" id="CHEBI:15378"/>
        <dbReference type="ChEBI" id="CHEBI:29985"/>
        <dbReference type="ChEBI" id="CHEBI:30616"/>
        <dbReference type="ChEBI" id="CHEBI:43474"/>
        <dbReference type="ChEBI" id="CHEBI:58359"/>
        <dbReference type="ChEBI" id="CHEBI:78520"/>
        <dbReference type="ChEBI" id="CHEBI:78521"/>
        <dbReference type="ChEBI" id="CHEBI:456216"/>
        <dbReference type="EC" id="6.3.5.7"/>
    </reaction>
</comment>
<comment type="subunit">
    <text evidence="1">Heterotrimer of A, B and C subunits.</text>
</comment>
<comment type="similarity">
    <text evidence="1">Belongs to the amidase family. GatA subfamily.</text>
</comment>
<evidence type="ECO:0000255" key="1">
    <source>
        <dbReference type="HAMAP-Rule" id="MF_00120"/>
    </source>
</evidence>
<organism>
    <name type="scientific">Streptococcus agalactiae serotype III (strain NEM316)</name>
    <dbReference type="NCBI Taxonomy" id="211110"/>
    <lineage>
        <taxon>Bacteria</taxon>
        <taxon>Bacillati</taxon>
        <taxon>Bacillota</taxon>
        <taxon>Bacilli</taxon>
        <taxon>Lactobacillales</taxon>
        <taxon>Streptococcaceae</taxon>
        <taxon>Streptococcus</taxon>
    </lineage>
</organism>
<proteinExistence type="inferred from homology"/>
<sequence>MSFNNQSIDQLHDLLVKKEISATELTKATLEDIHAREQAVGSFITISDDMAIAQAKEIDDKGIDADNVMSGIPLAVKDNISTKGILTTAASKMLYNYEPIFDATAVEKLYAKDMIVIGKANMDEFAMGGSTETSYFKKTNNAWDHSKVPGGSSGGSAAAVASGQVRLSLGSDTGGSIRQPASFNGIVGMKPTYGRVSRFGLFAFGSSLDQIGPMSQTVKENAQLLTVISGHDVRDSTSSERTVGDFTAKIGQDIQGMKIALPKEYLGEGIAPGVKETIIKAAKHLEKLGAVIEEVSLPHSKYGVAVYYIIASSEASSNLQRFDGIRYGYRTENYKNLDDIYVNTRSEGFGDEVKRRIMLGTFSLSSGYYDAYYKKAGQVRSLIIQDFEKVFADYDLILGPTAPTTAFDLDSLNHDPVAMYLADILTIPVNLAGLPGISIPAGFDKGLPVGMQLIGPKFSEETIYQVAAAFEATTDYHKQQPKIFGGEN</sequence>
<gene>
    <name evidence="1" type="primary">gatA</name>
    <name type="ordered locus">gbs1712</name>
</gene>
<accession>Q8E3P4</accession>
<feature type="chain" id="PRO_0000105207" description="Glutamyl-tRNA(Gln) amidotransferase subunit A">
    <location>
        <begin position="1"/>
        <end position="488"/>
    </location>
</feature>
<feature type="active site" description="Charge relay system" evidence="1">
    <location>
        <position position="77"/>
    </location>
</feature>
<feature type="active site" description="Charge relay system" evidence="1">
    <location>
        <position position="152"/>
    </location>
</feature>
<feature type="active site" description="Acyl-ester intermediate" evidence="1">
    <location>
        <position position="176"/>
    </location>
</feature>
<name>GATA_STRA3</name>
<dbReference type="EC" id="6.3.5.7" evidence="1"/>
<dbReference type="EMBL" id="AL766852">
    <property type="protein sequence ID" value="CAD47371.1"/>
    <property type="molecule type" value="Genomic_DNA"/>
</dbReference>
<dbReference type="RefSeq" id="WP_000009532.1">
    <property type="nucleotide sequence ID" value="NC_004368.1"/>
</dbReference>
<dbReference type="SMR" id="Q8E3P4"/>
<dbReference type="KEGG" id="san:gbs1712"/>
<dbReference type="eggNOG" id="COG0154">
    <property type="taxonomic scope" value="Bacteria"/>
</dbReference>
<dbReference type="HOGENOM" id="CLU_009600_0_3_9"/>
<dbReference type="Proteomes" id="UP000000823">
    <property type="component" value="Chromosome"/>
</dbReference>
<dbReference type="GO" id="GO:0030956">
    <property type="term" value="C:glutamyl-tRNA(Gln) amidotransferase complex"/>
    <property type="evidence" value="ECO:0007669"/>
    <property type="project" value="InterPro"/>
</dbReference>
<dbReference type="GO" id="GO:0005524">
    <property type="term" value="F:ATP binding"/>
    <property type="evidence" value="ECO:0007669"/>
    <property type="project" value="UniProtKB-KW"/>
</dbReference>
<dbReference type="GO" id="GO:0050567">
    <property type="term" value="F:glutaminyl-tRNA synthase (glutamine-hydrolyzing) activity"/>
    <property type="evidence" value="ECO:0007669"/>
    <property type="project" value="UniProtKB-UniRule"/>
</dbReference>
<dbReference type="GO" id="GO:0006412">
    <property type="term" value="P:translation"/>
    <property type="evidence" value="ECO:0007669"/>
    <property type="project" value="UniProtKB-UniRule"/>
</dbReference>
<dbReference type="Gene3D" id="3.90.1300.10">
    <property type="entry name" value="Amidase signature (AS) domain"/>
    <property type="match status" value="1"/>
</dbReference>
<dbReference type="HAMAP" id="MF_00120">
    <property type="entry name" value="GatA"/>
    <property type="match status" value="1"/>
</dbReference>
<dbReference type="InterPro" id="IPR000120">
    <property type="entry name" value="Amidase"/>
</dbReference>
<dbReference type="InterPro" id="IPR020556">
    <property type="entry name" value="Amidase_CS"/>
</dbReference>
<dbReference type="InterPro" id="IPR023631">
    <property type="entry name" value="Amidase_dom"/>
</dbReference>
<dbReference type="InterPro" id="IPR036928">
    <property type="entry name" value="AS_sf"/>
</dbReference>
<dbReference type="InterPro" id="IPR004412">
    <property type="entry name" value="GatA"/>
</dbReference>
<dbReference type="NCBIfam" id="TIGR00132">
    <property type="entry name" value="gatA"/>
    <property type="match status" value="1"/>
</dbReference>
<dbReference type="PANTHER" id="PTHR11895:SF151">
    <property type="entry name" value="GLUTAMYL-TRNA(GLN) AMIDOTRANSFERASE SUBUNIT A"/>
    <property type="match status" value="1"/>
</dbReference>
<dbReference type="PANTHER" id="PTHR11895">
    <property type="entry name" value="TRANSAMIDASE"/>
    <property type="match status" value="1"/>
</dbReference>
<dbReference type="Pfam" id="PF01425">
    <property type="entry name" value="Amidase"/>
    <property type="match status" value="1"/>
</dbReference>
<dbReference type="SUPFAM" id="SSF75304">
    <property type="entry name" value="Amidase signature (AS) enzymes"/>
    <property type="match status" value="1"/>
</dbReference>
<dbReference type="PROSITE" id="PS00571">
    <property type="entry name" value="AMIDASES"/>
    <property type="match status" value="1"/>
</dbReference>